<accession>A4SV17</accession>
<protein>
    <recommendedName>
        <fullName evidence="1">Imidazoleglycerol-phosphate dehydratase</fullName>
        <shortName evidence="1">IGPD</shortName>
        <ecNumber evidence="1">4.2.1.19</ecNumber>
    </recommendedName>
</protein>
<comment type="catalytic activity">
    <reaction evidence="1">
        <text>D-erythro-1-(imidazol-4-yl)glycerol 3-phosphate = 3-(imidazol-4-yl)-2-oxopropyl phosphate + H2O</text>
        <dbReference type="Rhea" id="RHEA:11040"/>
        <dbReference type="ChEBI" id="CHEBI:15377"/>
        <dbReference type="ChEBI" id="CHEBI:57766"/>
        <dbReference type="ChEBI" id="CHEBI:58278"/>
        <dbReference type="EC" id="4.2.1.19"/>
    </reaction>
</comment>
<comment type="pathway">
    <text evidence="1">Amino-acid biosynthesis; L-histidine biosynthesis; L-histidine from 5-phospho-alpha-D-ribose 1-diphosphate: step 6/9.</text>
</comment>
<comment type="subcellular location">
    <subcellularLocation>
        <location evidence="1">Cytoplasm</location>
    </subcellularLocation>
</comment>
<comment type="similarity">
    <text evidence="1">Belongs to the imidazoleglycerol-phosphate dehydratase family.</text>
</comment>
<name>HIS7_POLAQ</name>
<proteinExistence type="inferred from homology"/>
<keyword id="KW-0028">Amino-acid biosynthesis</keyword>
<keyword id="KW-0963">Cytoplasm</keyword>
<keyword id="KW-0368">Histidine biosynthesis</keyword>
<keyword id="KW-0456">Lyase</keyword>
<keyword id="KW-1185">Reference proteome</keyword>
<gene>
    <name evidence="1" type="primary">hisB</name>
    <name type="ordered locus">Pnuc_0109</name>
</gene>
<sequence length="195" mass="21213">MRQADVTRNTSETKIQISINLDGTGKAELASGVPFLDHMLDQIARHGMIDLKVVAQGDTHIDDHHTVEDVGITLGQAFAKAVGDKAGITRYGHSYVPLDETLSRVVVDFSGRPGLEFNVPFTRARVGDFDVDLSIEFFRGFVNHAGVTLHIDNLRGINAHHQIETVFKAFGRALRMALTVDPRAAGVVPSTKGSL</sequence>
<reference key="1">
    <citation type="journal article" date="2012" name="Stand. Genomic Sci.">
        <title>Complete genome sequence of Polynucleobacter necessarius subsp. asymbioticus type strain (QLW-P1DMWA-1(T)).</title>
        <authorList>
            <person name="Meincke L."/>
            <person name="Copeland A."/>
            <person name="Lapidus A."/>
            <person name="Lucas S."/>
            <person name="Berry K.W."/>
            <person name="Del Rio T.G."/>
            <person name="Hammon N."/>
            <person name="Dalin E."/>
            <person name="Tice H."/>
            <person name="Pitluck S."/>
            <person name="Richardson P."/>
            <person name="Bruce D."/>
            <person name="Goodwin L."/>
            <person name="Han C."/>
            <person name="Tapia R."/>
            <person name="Detter J.C."/>
            <person name="Schmutz J."/>
            <person name="Brettin T."/>
            <person name="Larimer F."/>
            <person name="Land M."/>
            <person name="Hauser L."/>
            <person name="Kyrpides N.C."/>
            <person name="Ivanova N."/>
            <person name="Goker M."/>
            <person name="Woyke T."/>
            <person name="Wu Q.L."/>
            <person name="Pockl M."/>
            <person name="Hahn M.W."/>
            <person name="Klenk H.P."/>
        </authorList>
    </citation>
    <scope>NUCLEOTIDE SEQUENCE [LARGE SCALE GENOMIC DNA]</scope>
    <source>
        <strain>DSM 18221 / CIP 109841 / QLW-P1DMWA-1</strain>
    </source>
</reference>
<organism>
    <name type="scientific">Polynucleobacter asymbioticus (strain DSM 18221 / CIP 109841 / QLW-P1DMWA-1)</name>
    <name type="common">Polynucleobacter necessarius subsp. asymbioticus</name>
    <dbReference type="NCBI Taxonomy" id="312153"/>
    <lineage>
        <taxon>Bacteria</taxon>
        <taxon>Pseudomonadati</taxon>
        <taxon>Pseudomonadota</taxon>
        <taxon>Betaproteobacteria</taxon>
        <taxon>Burkholderiales</taxon>
        <taxon>Burkholderiaceae</taxon>
        <taxon>Polynucleobacter</taxon>
    </lineage>
</organism>
<evidence type="ECO:0000255" key="1">
    <source>
        <dbReference type="HAMAP-Rule" id="MF_00076"/>
    </source>
</evidence>
<feature type="chain" id="PRO_1000075251" description="Imidazoleglycerol-phosphate dehydratase">
    <location>
        <begin position="1"/>
        <end position="195"/>
    </location>
</feature>
<dbReference type="EC" id="4.2.1.19" evidence="1"/>
<dbReference type="EMBL" id="CP000655">
    <property type="protein sequence ID" value="ABP33331.1"/>
    <property type="molecule type" value="Genomic_DNA"/>
</dbReference>
<dbReference type="RefSeq" id="WP_011901956.1">
    <property type="nucleotide sequence ID" value="NC_009379.1"/>
</dbReference>
<dbReference type="SMR" id="A4SV17"/>
<dbReference type="GeneID" id="31480456"/>
<dbReference type="KEGG" id="pnu:Pnuc_0109"/>
<dbReference type="eggNOG" id="COG0131">
    <property type="taxonomic scope" value="Bacteria"/>
</dbReference>
<dbReference type="HOGENOM" id="CLU_044308_2_0_4"/>
<dbReference type="UniPathway" id="UPA00031">
    <property type="reaction ID" value="UER00011"/>
</dbReference>
<dbReference type="Proteomes" id="UP000000231">
    <property type="component" value="Chromosome"/>
</dbReference>
<dbReference type="GO" id="GO:0005737">
    <property type="term" value="C:cytoplasm"/>
    <property type="evidence" value="ECO:0007669"/>
    <property type="project" value="UniProtKB-SubCell"/>
</dbReference>
<dbReference type="GO" id="GO:0004424">
    <property type="term" value="F:imidazoleglycerol-phosphate dehydratase activity"/>
    <property type="evidence" value="ECO:0007669"/>
    <property type="project" value="UniProtKB-UniRule"/>
</dbReference>
<dbReference type="GO" id="GO:0000105">
    <property type="term" value="P:L-histidine biosynthetic process"/>
    <property type="evidence" value="ECO:0007669"/>
    <property type="project" value="UniProtKB-UniRule"/>
</dbReference>
<dbReference type="CDD" id="cd07914">
    <property type="entry name" value="IGPD"/>
    <property type="match status" value="1"/>
</dbReference>
<dbReference type="FunFam" id="3.30.230.40:FF:000001">
    <property type="entry name" value="Imidazoleglycerol-phosphate dehydratase HisB"/>
    <property type="match status" value="1"/>
</dbReference>
<dbReference type="FunFam" id="3.30.230.40:FF:000003">
    <property type="entry name" value="Imidazoleglycerol-phosphate dehydratase HisB"/>
    <property type="match status" value="1"/>
</dbReference>
<dbReference type="Gene3D" id="3.30.230.40">
    <property type="entry name" value="Imidazole glycerol phosphate dehydratase, domain 1"/>
    <property type="match status" value="2"/>
</dbReference>
<dbReference type="HAMAP" id="MF_00076">
    <property type="entry name" value="HisB"/>
    <property type="match status" value="1"/>
</dbReference>
<dbReference type="InterPro" id="IPR038494">
    <property type="entry name" value="IGPD_sf"/>
</dbReference>
<dbReference type="InterPro" id="IPR000807">
    <property type="entry name" value="ImidazoleglycerolP_deHydtase"/>
</dbReference>
<dbReference type="InterPro" id="IPR020565">
    <property type="entry name" value="ImidazoleglycerP_deHydtase_CS"/>
</dbReference>
<dbReference type="InterPro" id="IPR020568">
    <property type="entry name" value="Ribosomal_Su5_D2-typ_SF"/>
</dbReference>
<dbReference type="NCBIfam" id="NF002106">
    <property type="entry name" value="PRK00951.1-1"/>
    <property type="match status" value="1"/>
</dbReference>
<dbReference type="NCBIfam" id="NF002109">
    <property type="entry name" value="PRK00951.1-5"/>
    <property type="match status" value="1"/>
</dbReference>
<dbReference type="NCBIfam" id="NF002111">
    <property type="entry name" value="PRK00951.2-1"/>
    <property type="match status" value="1"/>
</dbReference>
<dbReference type="NCBIfam" id="NF002114">
    <property type="entry name" value="PRK00951.2-4"/>
    <property type="match status" value="1"/>
</dbReference>
<dbReference type="PANTHER" id="PTHR23133:SF2">
    <property type="entry name" value="IMIDAZOLEGLYCEROL-PHOSPHATE DEHYDRATASE"/>
    <property type="match status" value="1"/>
</dbReference>
<dbReference type="PANTHER" id="PTHR23133">
    <property type="entry name" value="IMIDAZOLEGLYCEROL-PHOSPHATE DEHYDRATASE HIS7"/>
    <property type="match status" value="1"/>
</dbReference>
<dbReference type="Pfam" id="PF00475">
    <property type="entry name" value="IGPD"/>
    <property type="match status" value="1"/>
</dbReference>
<dbReference type="SUPFAM" id="SSF54211">
    <property type="entry name" value="Ribosomal protein S5 domain 2-like"/>
    <property type="match status" value="2"/>
</dbReference>
<dbReference type="PROSITE" id="PS00954">
    <property type="entry name" value="IGP_DEHYDRATASE_1"/>
    <property type="match status" value="1"/>
</dbReference>
<dbReference type="PROSITE" id="PS00955">
    <property type="entry name" value="IGP_DEHYDRATASE_2"/>
    <property type="match status" value="1"/>
</dbReference>